<evidence type="ECO:0000255" key="1">
    <source>
        <dbReference type="HAMAP-Rule" id="MF_00457"/>
    </source>
</evidence>
<gene>
    <name type="ordered locus">Aflv_0488</name>
</gene>
<name>Y488_ANOFW</name>
<proteinExistence type="inferred from homology"/>
<dbReference type="EMBL" id="CP000922">
    <property type="protein sequence ID" value="ACJ32872.1"/>
    <property type="molecule type" value="Genomic_DNA"/>
</dbReference>
<dbReference type="RefSeq" id="WP_012574193.1">
    <property type="nucleotide sequence ID" value="NC_011567.1"/>
</dbReference>
<dbReference type="SMR" id="B7GGS0"/>
<dbReference type="STRING" id="491915.Aflv_0488"/>
<dbReference type="GeneID" id="7036745"/>
<dbReference type="KEGG" id="afl:Aflv_0488"/>
<dbReference type="PATRIC" id="fig|491915.6.peg.500"/>
<dbReference type="eggNOG" id="COG2220">
    <property type="taxonomic scope" value="Bacteria"/>
</dbReference>
<dbReference type="HOGENOM" id="CLU_070010_4_1_9"/>
<dbReference type="Proteomes" id="UP000000742">
    <property type="component" value="Chromosome"/>
</dbReference>
<dbReference type="GO" id="GO:0016787">
    <property type="term" value="F:hydrolase activity"/>
    <property type="evidence" value="ECO:0007669"/>
    <property type="project" value="UniProtKB-UniRule"/>
</dbReference>
<dbReference type="Gene3D" id="3.60.15.10">
    <property type="entry name" value="Ribonuclease Z/Hydroxyacylglutathione hydrolase-like"/>
    <property type="match status" value="1"/>
</dbReference>
<dbReference type="HAMAP" id="MF_00457">
    <property type="entry name" value="UPF0173"/>
    <property type="match status" value="1"/>
</dbReference>
<dbReference type="InterPro" id="IPR001279">
    <property type="entry name" value="Metallo-B-lactamas"/>
</dbReference>
<dbReference type="InterPro" id="IPR036866">
    <property type="entry name" value="RibonucZ/Hydroxyglut_hydro"/>
</dbReference>
<dbReference type="InterPro" id="IPR022877">
    <property type="entry name" value="UPF0173"/>
</dbReference>
<dbReference type="InterPro" id="IPR050114">
    <property type="entry name" value="UPF0173_UPF0282_UlaG_hydrolase"/>
</dbReference>
<dbReference type="NCBIfam" id="NF001911">
    <property type="entry name" value="PRK00685.1"/>
    <property type="match status" value="1"/>
</dbReference>
<dbReference type="PANTHER" id="PTHR43546:SF3">
    <property type="entry name" value="UPF0173 METAL-DEPENDENT HYDROLASE MJ1163"/>
    <property type="match status" value="1"/>
</dbReference>
<dbReference type="PANTHER" id="PTHR43546">
    <property type="entry name" value="UPF0173 METAL-DEPENDENT HYDROLASE MJ1163-RELATED"/>
    <property type="match status" value="1"/>
</dbReference>
<dbReference type="Pfam" id="PF12706">
    <property type="entry name" value="Lactamase_B_2"/>
    <property type="match status" value="1"/>
</dbReference>
<dbReference type="SMART" id="SM00849">
    <property type="entry name" value="Lactamase_B"/>
    <property type="match status" value="1"/>
</dbReference>
<dbReference type="SUPFAM" id="SSF56281">
    <property type="entry name" value="Metallo-hydrolase/oxidoreductase"/>
    <property type="match status" value="1"/>
</dbReference>
<accession>B7GGS0</accession>
<comment type="similarity">
    <text evidence="1">Belongs to the UPF0173 family.</text>
</comment>
<protein>
    <recommendedName>
        <fullName evidence="1">UPF0173 metal-dependent hydrolase Aflv_0488</fullName>
    </recommendedName>
</protein>
<reference key="1">
    <citation type="journal article" date="2008" name="Genome Biol.">
        <title>Encapsulated in silica: genome, proteome and physiology of the thermophilic bacterium Anoxybacillus flavithermus WK1.</title>
        <authorList>
            <person name="Saw J.H."/>
            <person name="Mountain B.W."/>
            <person name="Feng L."/>
            <person name="Omelchenko M.V."/>
            <person name="Hou S."/>
            <person name="Saito J.A."/>
            <person name="Stott M.B."/>
            <person name="Li D."/>
            <person name="Zhao G."/>
            <person name="Wu J."/>
            <person name="Galperin M.Y."/>
            <person name="Koonin E.V."/>
            <person name="Makarova K.S."/>
            <person name="Wolf Y.I."/>
            <person name="Rigden D.J."/>
            <person name="Dunfield P.F."/>
            <person name="Wang L."/>
            <person name="Alam M."/>
        </authorList>
    </citation>
    <scope>NUCLEOTIDE SEQUENCE [LARGE SCALE GENOMIC DNA]</scope>
    <source>
        <strain>DSM 21510 / WK1</strain>
    </source>
</reference>
<organism>
    <name type="scientific">Anoxybacillus flavithermus (strain DSM 21510 / WK1)</name>
    <dbReference type="NCBI Taxonomy" id="491915"/>
    <lineage>
        <taxon>Bacteria</taxon>
        <taxon>Bacillati</taxon>
        <taxon>Bacillota</taxon>
        <taxon>Bacilli</taxon>
        <taxon>Bacillales</taxon>
        <taxon>Anoxybacillaceae</taxon>
        <taxon>Anoxybacillus</taxon>
    </lineage>
</organism>
<feature type="chain" id="PRO_1000197803" description="UPF0173 metal-dependent hydrolase Aflv_0488">
    <location>
        <begin position="1"/>
        <end position="225"/>
    </location>
</feature>
<sequence>MKLTYHGHSVVKIETNGKTIFIDPFITGNPLTDLKAEDVHVDVILLTHGHNDHVGDTVSLAKKNDALVIAPYELATYLSWKGVRIHPMHIGGSFTFDFGKVKLTQAFHGSSYVEENETIVYTGMPSGILFHAEGKTIYHAGDTALFSDMKLIGEMNDIDVAFLPIGDNFTMGPKDAAIAAKWLKAKMVVPIHYNTFPVIQQDPQQFVSMIEGIGRVLRIGESIEL</sequence>
<keyword id="KW-0378">Hydrolase</keyword>